<organism>
    <name type="scientific">Synechococcus sp. (strain ATCC 27144 / PCC 6301 / SAUG 1402/1)</name>
    <name type="common">Anacystis nidulans</name>
    <dbReference type="NCBI Taxonomy" id="269084"/>
    <lineage>
        <taxon>Bacteria</taxon>
        <taxon>Bacillati</taxon>
        <taxon>Cyanobacteriota</taxon>
        <taxon>Cyanophyceae</taxon>
        <taxon>Synechococcales</taxon>
        <taxon>Synechococcaceae</taxon>
        <taxon>Synechococcus</taxon>
    </lineage>
</organism>
<proteinExistence type="inferred from homology"/>
<name>GLUQ_SYNP6</name>
<protein>
    <recommendedName>
        <fullName evidence="1">Glutamyl-Q tRNA(Asp) synthetase</fullName>
        <shortName evidence="1">Glu-Q-RSs</shortName>
        <ecNumber evidence="1">6.1.1.-</ecNumber>
    </recommendedName>
</protein>
<sequence>MAIAPRGRFAPTPSGDLHLGSLVAAVGSYLHVRSQCGTWLLRIDDLDAPRVVPGASDRIQTCLEAFGLHWDEVVYFQQPQQEHYQAALEQLTATGRVYRCQCSRKQLSQSGDSVSVDGSLRYPGFCRDRQLSSEIEGSDRLNVQNLPAIALEDAWQGRYQQDLAQAVGDFILRRRDRLFSYHLATVVDDARQGITEVIRGLDLLASTPRQIALQQLLNLPTPHYGHLPLVVWPNGDKLSKQTKAPPLDLRQAPALLSQAIGHLGLAMPSDLQGAPVGEQLAWAIAHFPAPRLSKQPDSLS</sequence>
<dbReference type="EC" id="6.1.1.-" evidence="1"/>
<dbReference type="EMBL" id="AP008231">
    <property type="protein sequence ID" value="BAD78810.1"/>
    <property type="molecule type" value="Genomic_DNA"/>
</dbReference>
<dbReference type="RefSeq" id="WP_011242932.1">
    <property type="nucleotide sequence ID" value="NC_006576.1"/>
</dbReference>
<dbReference type="SMR" id="Q5N4F9"/>
<dbReference type="KEGG" id="syc:syc0620_d"/>
<dbReference type="eggNOG" id="COG0008">
    <property type="taxonomic scope" value="Bacteria"/>
</dbReference>
<dbReference type="Proteomes" id="UP000001175">
    <property type="component" value="Chromosome"/>
</dbReference>
<dbReference type="GO" id="GO:0005829">
    <property type="term" value="C:cytosol"/>
    <property type="evidence" value="ECO:0007669"/>
    <property type="project" value="TreeGrafter"/>
</dbReference>
<dbReference type="GO" id="GO:0005524">
    <property type="term" value="F:ATP binding"/>
    <property type="evidence" value="ECO:0007669"/>
    <property type="project" value="UniProtKB-KW"/>
</dbReference>
<dbReference type="GO" id="GO:0004818">
    <property type="term" value="F:glutamate-tRNA ligase activity"/>
    <property type="evidence" value="ECO:0007669"/>
    <property type="project" value="TreeGrafter"/>
</dbReference>
<dbReference type="GO" id="GO:0008270">
    <property type="term" value="F:zinc ion binding"/>
    <property type="evidence" value="ECO:0007669"/>
    <property type="project" value="UniProtKB-UniRule"/>
</dbReference>
<dbReference type="GO" id="GO:0006424">
    <property type="term" value="P:glutamyl-tRNA aminoacylation"/>
    <property type="evidence" value="ECO:0007669"/>
    <property type="project" value="InterPro"/>
</dbReference>
<dbReference type="GO" id="GO:0006400">
    <property type="term" value="P:tRNA modification"/>
    <property type="evidence" value="ECO:0007669"/>
    <property type="project" value="InterPro"/>
</dbReference>
<dbReference type="Gene3D" id="3.40.50.620">
    <property type="entry name" value="HUPs"/>
    <property type="match status" value="1"/>
</dbReference>
<dbReference type="HAMAP" id="MF_01428">
    <property type="entry name" value="Glu_Q_tRNA_synth"/>
    <property type="match status" value="1"/>
</dbReference>
<dbReference type="InterPro" id="IPR022380">
    <property type="entry name" value="Glu-Q_tRNA(Asp)_Synthase"/>
</dbReference>
<dbReference type="InterPro" id="IPR000924">
    <property type="entry name" value="Glu/Gln-tRNA-synth"/>
</dbReference>
<dbReference type="InterPro" id="IPR020058">
    <property type="entry name" value="Glu/Gln-tRNA-synth_Ib_cat-dom"/>
</dbReference>
<dbReference type="InterPro" id="IPR049940">
    <property type="entry name" value="GluQ/Sye"/>
</dbReference>
<dbReference type="InterPro" id="IPR014729">
    <property type="entry name" value="Rossmann-like_a/b/a_fold"/>
</dbReference>
<dbReference type="NCBIfam" id="NF004314">
    <property type="entry name" value="PRK05710.1-3"/>
    <property type="match status" value="1"/>
</dbReference>
<dbReference type="NCBIfam" id="TIGR03838">
    <property type="entry name" value="queuosine_YadB"/>
    <property type="match status" value="1"/>
</dbReference>
<dbReference type="PANTHER" id="PTHR43311">
    <property type="entry name" value="GLUTAMATE--TRNA LIGASE"/>
    <property type="match status" value="1"/>
</dbReference>
<dbReference type="PANTHER" id="PTHR43311:SF1">
    <property type="entry name" value="GLUTAMYL-Q TRNA(ASP) SYNTHETASE"/>
    <property type="match status" value="1"/>
</dbReference>
<dbReference type="Pfam" id="PF00749">
    <property type="entry name" value="tRNA-synt_1c"/>
    <property type="match status" value="1"/>
</dbReference>
<dbReference type="PRINTS" id="PR00987">
    <property type="entry name" value="TRNASYNTHGLU"/>
</dbReference>
<dbReference type="SUPFAM" id="SSF52374">
    <property type="entry name" value="Nucleotidylyl transferase"/>
    <property type="match status" value="1"/>
</dbReference>
<reference key="1">
    <citation type="journal article" date="2007" name="Photosyn. Res.">
        <title>Complete nucleotide sequence of the freshwater unicellular cyanobacterium Synechococcus elongatus PCC 6301 chromosome: gene content and organization.</title>
        <authorList>
            <person name="Sugita C."/>
            <person name="Ogata K."/>
            <person name="Shikata M."/>
            <person name="Jikuya H."/>
            <person name="Takano J."/>
            <person name="Furumichi M."/>
            <person name="Kanehisa M."/>
            <person name="Omata T."/>
            <person name="Sugiura M."/>
            <person name="Sugita M."/>
        </authorList>
    </citation>
    <scope>NUCLEOTIDE SEQUENCE [LARGE SCALE GENOMIC DNA]</scope>
    <source>
        <strain>ATCC 27144 / PCC 6301 / SAUG 1402/1</strain>
    </source>
</reference>
<keyword id="KW-0030">Aminoacyl-tRNA synthetase</keyword>
<keyword id="KW-0067">ATP-binding</keyword>
<keyword id="KW-0436">Ligase</keyword>
<keyword id="KW-0479">Metal-binding</keyword>
<keyword id="KW-0547">Nucleotide-binding</keyword>
<keyword id="KW-0862">Zinc</keyword>
<evidence type="ECO:0000255" key="1">
    <source>
        <dbReference type="HAMAP-Rule" id="MF_01428"/>
    </source>
</evidence>
<comment type="function">
    <text evidence="1">Catalyzes the tRNA-independent activation of glutamate in presence of ATP and the subsequent transfer of glutamate onto a tRNA(Asp). Glutamate is transferred on the 2-amino-5-(4,5-dihydroxy-2-cyclopenten-1-yl) moiety of the queuosine in the wobble position of the QUC anticodon.</text>
</comment>
<comment type="cofactor">
    <cofactor evidence="1">
        <name>Zn(2+)</name>
        <dbReference type="ChEBI" id="CHEBI:29105"/>
    </cofactor>
    <text evidence="1">Binds 1 zinc ion per subunit.</text>
</comment>
<comment type="similarity">
    <text evidence="1">Belongs to the class-I aminoacyl-tRNA synthetase family. GluQ subfamily.</text>
</comment>
<feature type="chain" id="PRO_0000208329" description="Glutamyl-Q tRNA(Asp) synthetase">
    <location>
        <begin position="1"/>
        <end position="300"/>
    </location>
</feature>
<feature type="short sequence motif" description="'HIGH' region">
    <location>
        <begin position="11"/>
        <end position="21"/>
    </location>
</feature>
<feature type="short sequence motif" description="'KMSKS' region">
    <location>
        <begin position="237"/>
        <end position="241"/>
    </location>
</feature>
<feature type="binding site" evidence="1">
    <location>
        <begin position="8"/>
        <end position="12"/>
    </location>
    <ligand>
        <name>L-glutamate</name>
        <dbReference type="ChEBI" id="CHEBI:29985"/>
    </ligand>
</feature>
<feature type="binding site" evidence="1">
    <location>
        <position position="44"/>
    </location>
    <ligand>
        <name>L-glutamate</name>
        <dbReference type="ChEBI" id="CHEBI:29985"/>
    </ligand>
</feature>
<feature type="binding site" evidence="1">
    <location>
        <position position="100"/>
    </location>
    <ligand>
        <name>Zn(2+)</name>
        <dbReference type="ChEBI" id="CHEBI:29105"/>
    </ligand>
</feature>
<feature type="binding site" evidence="1">
    <location>
        <position position="102"/>
    </location>
    <ligand>
        <name>Zn(2+)</name>
        <dbReference type="ChEBI" id="CHEBI:29105"/>
    </ligand>
</feature>
<feature type="binding site" evidence="1">
    <location>
        <position position="122"/>
    </location>
    <ligand>
        <name>Zn(2+)</name>
        <dbReference type="ChEBI" id="CHEBI:29105"/>
    </ligand>
</feature>
<feature type="binding site" evidence="1">
    <location>
        <position position="126"/>
    </location>
    <ligand>
        <name>Zn(2+)</name>
        <dbReference type="ChEBI" id="CHEBI:29105"/>
    </ligand>
</feature>
<feature type="binding site" evidence="1">
    <location>
        <position position="181"/>
    </location>
    <ligand>
        <name>L-glutamate</name>
        <dbReference type="ChEBI" id="CHEBI:29985"/>
    </ligand>
</feature>
<feature type="binding site" evidence="1">
    <location>
        <position position="199"/>
    </location>
    <ligand>
        <name>L-glutamate</name>
        <dbReference type="ChEBI" id="CHEBI:29985"/>
    </ligand>
</feature>
<feature type="binding site" evidence="1">
    <location>
        <position position="240"/>
    </location>
    <ligand>
        <name>ATP</name>
        <dbReference type="ChEBI" id="CHEBI:30616"/>
    </ligand>
</feature>
<gene>
    <name evidence="1" type="primary">gluQ</name>
    <name type="ordered locus">syc0620_d</name>
</gene>
<accession>Q5N4F9</accession>